<gene>
    <name evidence="14" type="primary">eEF1gamma</name>
    <name evidence="11" type="synonym">Ef1g</name>
    <name evidence="14" type="ORF">CG11901</name>
</gene>
<name>EF1G_DROME</name>
<protein>
    <recommendedName>
        <fullName>Elongation factor 1-gamma</fullName>
        <shortName evidence="10">EF1gamma</shortName>
    </recommendedName>
    <alternativeName>
        <fullName>eEF-1B gamma</fullName>
    </alternativeName>
</protein>
<dbReference type="EMBL" id="AF148814">
    <property type="protein sequence ID" value="AAF26671.1"/>
    <property type="molecule type" value="Genomic_DNA"/>
</dbReference>
<dbReference type="EMBL" id="AE014297">
    <property type="protein sequence ID" value="AAF56877.2"/>
    <property type="molecule type" value="Genomic_DNA"/>
</dbReference>
<dbReference type="EMBL" id="AE014297">
    <property type="protein sequence ID" value="AAN14165.1"/>
    <property type="molecule type" value="Genomic_DNA"/>
</dbReference>
<dbReference type="EMBL" id="AE014297">
    <property type="protein sequence ID" value="ADV37398.1"/>
    <property type="molecule type" value="Genomic_DNA"/>
</dbReference>
<dbReference type="EMBL" id="AF148813">
    <property type="protein sequence ID" value="AAF26670.1"/>
    <property type="molecule type" value="mRNA"/>
</dbReference>
<dbReference type="EMBL" id="BT001612">
    <property type="protein sequence ID" value="AAN71367.1"/>
    <property type="status" value="ALT_INIT"/>
    <property type="molecule type" value="mRNA"/>
</dbReference>
<dbReference type="EMBL" id="BT012478">
    <property type="protein sequence ID" value="AAS93749.1"/>
    <property type="status" value="ALT_SEQ"/>
    <property type="molecule type" value="mRNA"/>
</dbReference>
<dbReference type="RefSeq" id="NP_001189308.1">
    <property type="nucleotide sequence ID" value="NM_001202379.2"/>
</dbReference>
<dbReference type="RefSeq" id="NP_652000.1">
    <property type="nucleotide sequence ID" value="NM_143743.3"/>
</dbReference>
<dbReference type="RefSeq" id="NP_733280.1">
    <property type="nucleotide sequence ID" value="NM_170401.3"/>
</dbReference>
<dbReference type="SMR" id="Q9NJH0"/>
<dbReference type="BioGRID" id="69280">
    <property type="interactions" value="37"/>
</dbReference>
<dbReference type="DIP" id="DIP-18800N"/>
<dbReference type="FunCoup" id="Q9NJH0">
    <property type="interactions" value="1810"/>
</dbReference>
<dbReference type="IntAct" id="Q9NJH0">
    <property type="interactions" value="4"/>
</dbReference>
<dbReference type="MINT" id="Q9NJH0"/>
<dbReference type="STRING" id="7227.FBpp0291632"/>
<dbReference type="GlyGen" id="Q9NJH0">
    <property type="glycosylation" value="1 site, 1 O-linked glycan (1 site)"/>
</dbReference>
<dbReference type="PaxDb" id="7227-FBpp0084761"/>
<dbReference type="DNASU" id="44791"/>
<dbReference type="EnsemblMetazoa" id="FBtr0085392">
    <property type="protein sequence ID" value="FBpp0084761"/>
    <property type="gene ID" value="FBgn0029176"/>
</dbReference>
<dbReference type="EnsemblMetazoa" id="FBtr0085393">
    <property type="protein sequence ID" value="FBpp0084762"/>
    <property type="gene ID" value="FBgn0029176"/>
</dbReference>
<dbReference type="EnsemblMetazoa" id="FBtr0302442">
    <property type="protein sequence ID" value="FBpp0291632"/>
    <property type="gene ID" value="FBgn0029176"/>
</dbReference>
<dbReference type="GeneID" id="44791"/>
<dbReference type="KEGG" id="dme:Dmel_CG11901"/>
<dbReference type="UCSC" id="CG11901-RA">
    <property type="organism name" value="d. melanogaster"/>
</dbReference>
<dbReference type="AGR" id="FB:FBgn0029176"/>
<dbReference type="CTD" id="44791"/>
<dbReference type="FlyBase" id="FBgn0029176">
    <property type="gene designation" value="eEF1gamma"/>
</dbReference>
<dbReference type="VEuPathDB" id="VectorBase:FBgn0029176"/>
<dbReference type="eggNOG" id="KOG0867">
    <property type="taxonomic scope" value="Eukaryota"/>
</dbReference>
<dbReference type="eggNOG" id="KOG1627">
    <property type="taxonomic scope" value="Eukaryota"/>
</dbReference>
<dbReference type="GeneTree" id="ENSGT00390000007552"/>
<dbReference type="HOGENOM" id="CLU_011226_3_1_1"/>
<dbReference type="InParanoid" id="Q9NJH0"/>
<dbReference type="OMA" id="TQYFSWT"/>
<dbReference type="OrthoDB" id="249703at2759"/>
<dbReference type="PhylomeDB" id="Q9NJH0"/>
<dbReference type="Reactome" id="R-DME-156842">
    <property type="pathway name" value="Eukaryotic Translation Elongation"/>
</dbReference>
<dbReference type="SignaLink" id="Q9NJH0"/>
<dbReference type="BioGRID-ORCS" id="44791">
    <property type="hits" value="1 hit in 1 CRISPR screen"/>
</dbReference>
<dbReference type="ChiTaRS" id="Ef1gamma">
    <property type="organism name" value="fly"/>
</dbReference>
<dbReference type="GenomeRNAi" id="44791"/>
<dbReference type="PRO" id="PR:Q9NJH0"/>
<dbReference type="Proteomes" id="UP000000803">
    <property type="component" value="Chromosome 3R"/>
</dbReference>
<dbReference type="Bgee" id="FBgn0029176">
    <property type="expression patterns" value="Expressed in embryonic/larval hemocyte (Drosophila) and 273 other cell types or tissues"/>
</dbReference>
<dbReference type="ExpressionAtlas" id="Q9NJH0">
    <property type="expression patterns" value="baseline and differential"/>
</dbReference>
<dbReference type="GO" id="GO:0005737">
    <property type="term" value="C:cytoplasm"/>
    <property type="evidence" value="ECO:0000314"/>
    <property type="project" value="FlyBase"/>
</dbReference>
<dbReference type="GO" id="GO:0005856">
    <property type="term" value="C:cytoskeleton"/>
    <property type="evidence" value="ECO:0007669"/>
    <property type="project" value="UniProtKB-SubCell"/>
</dbReference>
<dbReference type="GO" id="GO:0005853">
    <property type="term" value="C:eukaryotic translation elongation factor 1 complex"/>
    <property type="evidence" value="ECO:0000250"/>
    <property type="project" value="FlyBase"/>
</dbReference>
<dbReference type="GO" id="GO:0005634">
    <property type="term" value="C:nucleus"/>
    <property type="evidence" value="ECO:0000314"/>
    <property type="project" value="FlyBase"/>
</dbReference>
<dbReference type="GO" id="GO:0008017">
    <property type="term" value="F:microtubule binding"/>
    <property type="evidence" value="ECO:0000314"/>
    <property type="project" value="UniProtKB"/>
</dbReference>
<dbReference type="GO" id="GO:0003746">
    <property type="term" value="F:translation elongation factor activity"/>
    <property type="evidence" value="ECO:0000250"/>
    <property type="project" value="FlyBase"/>
</dbReference>
<dbReference type="GO" id="GO:1902513">
    <property type="term" value="P:regulation of organelle transport along microtubule"/>
    <property type="evidence" value="ECO:0000315"/>
    <property type="project" value="UniProtKB"/>
</dbReference>
<dbReference type="GO" id="GO:0006414">
    <property type="term" value="P:translational elongation"/>
    <property type="evidence" value="ECO:0000250"/>
    <property type="project" value="FlyBase"/>
</dbReference>
<dbReference type="CDD" id="cd03181">
    <property type="entry name" value="GST_C_EF1Bgamma_like"/>
    <property type="match status" value="1"/>
</dbReference>
<dbReference type="CDD" id="cd03044">
    <property type="entry name" value="GST_N_EF1Bgamma"/>
    <property type="match status" value="1"/>
</dbReference>
<dbReference type="FunFam" id="1.20.1050.10:FF:000006">
    <property type="entry name" value="Elongation factor 1 gamma"/>
    <property type="match status" value="1"/>
</dbReference>
<dbReference type="FunFam" id="3.40.30.10:FF:000233">
    <property type="entry name" value="Elongation factor 1-gamma"/>
    <property type="match status" value="1"/>
</dbReference>
<dbReference type="FunFam" id="3.30.70.1010:FF:000001">
    <property type="entry name" value="Elongation factor 1-gamma 1"/>
    <property type="match status" value="1"/>
</dbReference>
<dbReference type="Gene3D" id="1.20.1050.10">
    <property type="match status" value="1"/>
</dbReference>
<dbReference type="Gene3D" id="3.40.30.10">
    <property type="entry name" value="Glutaredoxin"/>
    <property type="match status" value="1"/>
</dbReference>
<dbReference type="Gene3D" id="3.30.70.1010">
    <property type="entry name" value="Translation elongation factor EF1B, gamma chain, conserved domain"/>
    <property type="match status" value="1"/>
</dbReference>
<dbReference type="InterPro" id="IPR050802">
    <property type="entry name" value="EF-GSTs"/>
</dbReference>
<dbReference type="InterPro" id="IPR001662">
    <property type="entry name" value="EF1B_G_C"/>
</dbReference>
<dbReference type="InterPro" id="IPR036433">
    <property type="entry name" value="EF1B_G_C_sf"/>
</dbReference>
<dbReference type="InterPro" id="IPR010987">
    <property type="entry name" value="Glutathione-S-Trfase_C-like"/>
</dbReference>
<dbReference type="InterPro" id="IPR036282">
    <property type="entry name" value="Glutathione-S-Trfase_C_sf"/>
</dbReference>
<dbReference type="InterPro" id="IPR040079">
    <property type="entry name" value="Glutathione_S-Trfase"/>
</dbReference>
<dbReference type="InterPro" id="IPR004045">
    <property type="entry name" value="Glutathione_S-Trfase_N"/>
</dbReference>
<dbReference type="InterPro" id="IPR004046">
    <property type="entry name" value="GST_C"/>
</dbReference>
<dbReference type="InterPro" id="IPR036249">
    <property type="entry name" value="Thioredoxin-like_sf"/>
</dbReference>
<dbReference type="PANTHER" id="PTHR43986">
    <property type="entry name" value="ELONGATION FACTOR 1-GAMMA"/>
    <property type="match status" value="1"/>
</dbReference>
<dbReference type="PANTHER" id="PTHR43986:SF1">
    <property type="entry name" value="ELONGATION FACTOR 1-GAMMA"/>
    <property type="match status" value="1"/>
</dbReference>
<dbReference type="Pfam" id="PF00647">
    <property type="entry name" value="EF1G"/>
    <property type="match status" value="1"/>
</dbReference>
<dbReference type="Pfam" id="PF00043">
    <property type="entry name" value="GST_C"/>
    <property type="match status" value="1"/>
</dbReference>
<dbReference type="Pfam" id="PF02798">
    <property type="entry name" value="GST_N"/>
    <property type="match status" value="1"/>
</dbReference>
<dbReference type="SFLD" id="SFLDS00019">
    <property type="entry name" value="Glutathione_Transferase_(cytos"/>
    <property type="match status" value="1"/>
</dbReference>
<dbReference type="SFLD" id="SFLDG00358">
    <property type="entry name" value="Main_(cytGST)"/>
    <property type="match status" value="1"/>
</dbReference>
<dbReference type="SMART" id="SM01183">
    <property type="entry name" value="EF1G"/>
    <property type="match status" value="1"/>
</dbReference>
<dbReference type="SUPFAM" id="SSF89942">
    <property type="entry name" value="eEF1-gamma domain"/>
    <property type="match status" value="1"/>
</dbReference>
<dbReference type="SUPFAM" id="SSF47616">
    <property type="entry name" value="GST C-terminal domain-like"/>
    <property type="match status" value="1"/>
</dbReference>
<dbReference type="SUPFAM" id="SSF52833">
    <property type="entry name" value="Thioredoxin-like"/>
    <property type="match status" value="1"/>
</dbReference>
<dbReference type="PROSITE" id="PS50040">
    <property type="entry name" value="EF1G_C"/>
    <property type="match status" value="1"/>
</dbReference>
<dbReference type="PROSITE" id="PS50405">
    <property type="entry name" value="GST_CTER"/>
    <property type="match status" value="1"/>
</dbReference>
<dbReference type="PROSITE" id="PS50404">
    <property type="entry name" value="GST_NTER"/>
    <property type="match status" value="1"/>
</dbReference>
<accession>Q9NJH0</accession>
<accession>A0A0B4JD11</accession>
<accession>A4V3K9</accession>
<accession>Q6NL63</accession>
<accession>Q8IGT6</accession>
<accession>Q9NJH1</accession>
<accession>Q9VAM7</accession>
<comment type="function">
    <text evidence="1 7 8 9">Microtubule binding protein involved in regulation of microtubule-based transport (PubMed:24163433). Probably plays a role in anchoring the EF-1 complex to other cellular components (By similarity). Probably involved in formation and/or development of mechanosensory organs during metamorphosis (PubMed:38264934). Required for cellular and organismal viability (PubMed:19841092). Not essential for the innate immune response to bacterial infection (PubMed:19841092).</text>
</comment>
<comment type="subunit">
    <text evidence="7 8 9">Interacts with microtubules (PubMed:24163433). May interact with BicDR; the interaction is probably indirect (PubMed:38264934). Interacts (via C-terminus) with Doa; the interaction is probably direct, is transient and leads to phosphorylation of eEF1gamma by Doa (PubMed:19841092). EF-1 is composed of four subunits: alpha, beta, delta, and gamma.</text>
</comment>
<comment type="subcellular location">
    <subcellularLocation>
        <location evidence="7">Cytoplasm</location>
    </subcellularLocation>
    <subcellularLocation>
        <location evidence="7">Nucleus</location>
    </subcellularLocation>
    <subcellularLocation>
        <location evidence="7 8">Cytoplasm</location>
        <location evidence="7 8">Cytoskeleton</location>
    </subcellularLocation>
    <text evidence="7 8">Partially colocalizes with and binds to the microtubule cytoskeleton.</text>
</comment>
<comment type="developmental stage">
    <text evidence="7">Produced both maternally and zygotically (PubMed:19841092). Ubiquitously expressed during embryogenesis accumulating at the posterior pole with an anterior to posterior gradient in the early blastoderm (at protein level) (PubMed:19841092).</text>
</comment>
<comment type="induction">
    <text evidence="7">Produces at least 2 transcripts by alternative transcriptional initiation encoding identical proteins; one of these transcripts (EF1gamma-RA) is induced by ecdysone signaling during pupation.</text>
</comment>
<comment type="PTM">
    <text evidence="7 8">Phosphorylated on Ser-294 by LAMMER kinases, including Doa (PubMed:19841092). Phosphorylation on Ser-294 by Doa is required for negative regulation of microtubule-based transport (PubMed:24163433).</text>
</comment>
<comment type="disruption phenotype">
    <text evidence="7 9">Increased larval lethality (PubMed:19841092). Some adults survive, probably due to maternal contribution, but have shortened posterior scutellar bristle macrochaetae (PubMed:38264934). RNAi-mediated knockdown is larval lethal (PubMed:19841092). RNAi-mediated knockdown in sensory organ precursor cells prevents formation of thoracic bristles (PubMed:19841092). RNAi-mediated knockdown in the developing eye disrupts its morphology (PubMed:19841092).</text>
</comment>
<comment type="sequence caution" evidence="12">
    <conflict type="erroneous initiation">
        <sequence resource="EMBL-CDS" id="AAN71367"/>
    </conflict>
</comment>
<comment type="sequence caution" evidence="12">
    <conflict type="erroneous termination">
        <sequence resource="EMBL-CDS" id="AAS93749"/>
    </conflict>
    <text>Truncated C-terminus.</text>
</comment>
<feature type="chain" id="PRO_0000208824" description="Elongation factor 1-gamma">
    <location>
        <begin position="1"/>
        <end position="431"/>
    </location>
</feature>
<feature type="domain" description="GST N-terminal" evidence="4">
    <location>
        <begin position="2"/>
        <end position="84"/>
    </location>
</feature>
<feature type="domain" description="GST C-terminal" evidence="5">
    <location>
        <begin position="86"/>
        <end position="212"/>
    </location>
</feature>
<feature type="domain" description="EF-1-gamma C-terminal" evidence="2">
    <location>
        <begin position="272"/>
        <end position="431"/>
    </location>
</feature>
<feature type="region of interest" description="Disordered" evidence="6">
    <location>
        <begin position="223"/>
        <end position="261"/>
    </location>
</feature>
<feature type="compositionally biased region" description="Low complexity" evidence="6">
    <location>
        <begin position="226"/>
        <end position="236"/>
    </location>
</feature>
<feature type="compositionally biased region" description="Basic and acidic residues" evidence="6">
    <location>
        <begin position="237"/>
        <end position="254"/>
    </location>
</feature>
<feature type="modified residue" description="Phosphoserine" evidence="3">
    <location>
        <position position="294"/>
    </location>
</feature>
<feature type="mutagenesis site" description="Almost completely eliminates phosphorylation by LAMMER kinases. Partially compromises protein function. Fails to negatively regulate microtubule-based transport but does not prevent microtubule binding." evidence="7 8">
    <original>S</original>
    <variation>A</variation>
    <location>
        <position position="294"/>
    </location>
</feature>
<feature type="mutagenesis site" description="Phosphomimetic mutation. Has no effect on microtubule binding can still negatively regulate microtubule-based transport." evidence="8">
    <original>S</original>
    <variation>E</variation>
    <location>
        <position position="294"/>
    </location>
</feature>
<feature type="sequence conflict" description="In Ref. 1; AAF26671." evidence="12" ref="1">
    <original>V</original>
    <variation>D</variation>
    <location>
        <position position="112"/>
    </location>
</feature>
<feature type="sequence conflict" description="In Ref. 5; AAS93749." evidence="12" ref="5">
    <original>A</original>
    <variation>T</variation>
    <location>
        <position position="311"/>
    </location>
</feature>
<proteinExistence type="evidence at protein level"/>
<evidence type="ECO:0000250" key="1">
    <source>
        <dbReference type="UniProtKB" id="P29547"/>
    </source>
</evidence>
<evidence type="ECO:0000255" key="2">
    <source>
        <dbReference type="PROSITE-ProRule" id="PRU00519"/>
    </source>
</evidence>
<evidence type="ECO:0000255" key="3">
    <source>
        <dbReference type="PROSITE-ProRule" id="PRU00673"/>
    </source>
</evidence>
<evidence type="ECO:0000255" key="4">
    <source>
        <dbReference type="PROSITE-ProRule" id="PRU00684"/>
    </source>
</evidence>
<evidence type="ECO:0000255" key="5">
    <source>
        <dbReference type="PROSITE-ProRule" id="PRU00685"/>
    </source>
</evidence>
<evidence type="ECO:0000256" key="6">
    <source>
        <dbReference type="SAM" id="MobiDB-lite"/>
    </source>
</evidence>
<evidence type="ECO:0000269" key="7">
    <source>
    </source>
</evidence>
<evidence type="ECO:0000269" key="8">
    <source>
    </source>
</evidence>
<evidence type="ECO:0000269" key="9">
    <source>
    </source>
</evidence>
<evidence type="ECO:0000303" key="10">
    <source>
    </source>
</evidence>
<evidence type="ECO:0000303" key="11">
    <source ref="1"/>
</evidence>
<evidence type="ECO:0000305" key="12"/>
<evidence type="ECO:0000312" key="13">
    <source>
        <dbReference type="EMBL" id="AAF26670.1"/>
    </source>
</evidence>
<evidence type="ECO:0000312" key="14">
    <source>
        <dbReference type="FlyBase" id="FBgn0029176"/>
    </source>
</evidence>
<evidence type="ECO:0000312" key="15">
    <source>
        <dbReference type="Proteomes" id="UP000000803"/>
    </source>
</evidence>
<organism evidence="15">
    <name type="scientific">Drosophila melanogaster</name>
    <name type="common">Fruit fly</name>
    <dbReference type="NCBI Taxonomy" id="7227"/>
    <lineage>
        <taxon>Eukaryota</taxon>
        <taxon>Metazoa</taxon>
        <taxon>Ecdysozoa</taxon>
        <taxon>Arthropoda</taxon>
        <taxon>Hexapoda</taxon>
        <taxon>Insecta</taxon>
        <taxon>Pterygota</taxon>
        <taxon>Neoptera</taxon>
        <taxon>Endopterygota</taxon>
        <taxon>Diptera</taxon>
        <taxon>Brachycera</taxon>
        <taxon>Muscomorpha</taxon>
        <taxon>Ephydroidea</taxon>
        <taxon>Drosophilidae</taxon>
        <taxon>Drosophila</taxon>
        <taxon>Sophophora</taxon>
    </lineage>
</organism>
<keyword id="KW-0963">Cytoplasm</keyword>
<keyword id="KW-0206">Cytoskeleton</keyword>
<keyword id="KW-0251">Elongation factor</keyword>
<keyword id="KW-0539">Nucleus</keyword>
<keyword id="KW-0597">Phosphoprotein</keyword>
<keyword id="KW-0648">Protein biosynthesis</keyword>
<keyword id="KW-1185">Reference proteome</keyword>
<reference key="1">
    <citation type="submission" date="1999-05" db="EMBL/GenBank/DDBJ databases">
        <title>Characterization of the Drosophila translational elongation factor 1 gamma (EF1g).</title>
        <authorList>
            <person name="Chaney L.C."/>
            <person name="Hitte C."/>
            <person name="Kinzy T."/>
            <person name="Horn M."/>
            <person name="Rabinow L."/>
        </authorList>
    </citation>
    <scope>NUCLEOTIDE SEQUENCE [GENOMIC DNA]</scope>
    <source>
        <strain>Canton-S</strain>
    </source>
</reference>
<reference key="2">
    <citation type="journal article" date="2000" name="Science">
        <title>The genome sequence of Drosophila melanogaster.</title>
        <authorList>
            <person name="Adams M.D."/>
            <person name="Celniker S.E."/>
            <person name="Holt R.A."/>
            <person name="Evans C.A."/>
            <person name="Gocayne J.D."/>
            <person name="Amanatides P.G."/>
            <person name="Scherer S.E."/>
            <person name="Li P.W."/>
            <person name="Hoskins R.A."/>
            <person name="Galle R.F."/>
            <person name="George R.A."/>
            <person name="Lewis S.E."/>
            <person name="Richards S."/>
            <person name="Ashburner M."/>
            <person name="Henderson S.N."/>
            <person name="Sutton G.G."/>
            <person name="Wortman J.R."/>
            <person name="Yandell M.D."/>
            <person name="Zhang Q."/>
            <person name="Chen L.X."/>
            <person name="Brandon R.C."/>
            <person name="Rogers Y.-H.C."/>
            <person name="Blazej R.G."/>
            <person name="Champe M."/>
            <person name="Pfeiffer B.D."/>
            <person name="Wan K.H."/>
            <person name="Doyle C."/>
            <person name="Baxter E.G."/>
            <person name="Helt G."/>
            <person name="Nelson C.R."/>
            <person name="Miklos G.L.G."/>
            <person name="Abril J.F."/>
            <person name="Agbayani A."/>
            <person name="An H.-J."/>
            <person name="Andrews-Pfannkoch C."/>
            <person name="Baldwin D."/>
            <person name="Ballew R.M."/>
            <person name="Basu A."/>
            <person name="Baxendale J."/>
            <person name="Bayraktaroglu L."/>
            <person name="Beasley E.M."/>
            <person name="Beeson K.Y."/>
            <person name="Benos P.V."/>
            <person name="Berman B.P."/>
            <person name="Bhandari D."/>
            <person name="Bolshakov S."/>
            <person name="Borkova D."/>
            <person name="Botchan M.R."/>
            <person name="Bouck J."/>
            <person name="Brokstein P."/>
            <person name="Brottier P."/>
            <person name="Burtis K.C."/>
            <person name="Busam D.A."/>
            <person name="Butler H."/>
            <person name="Cadieu E."/>
            <person name="Center A."/>
            <person name="Chandra I."/>
            <person name="Cherry J.M."/>
            <person name="Cawley S."/>
            <person name="Dahlke C."/>
            <person name="Davenport L.B."/>
            <person name="Davies P."/>
            <person name="de Pablos B."/>
            <person name="Delcher A."/>
            <person name="Deng Z."/>
            <person name="Mays A.D."/>
            <person name="Dew I."/>
            <person name="Dietz S.M."/>
            <person name="Dodson K."/>
            <person name="Doup L.E."/>
            <person name="Downes M."/>
            <person name="Dugan-Rocha S."/>
            <person name="Dunkov B.C."/>
            <person name="Dunn P."/>
            <person name="Durbin K.J."/>
            <person name="Evangelista C.C."/>
            <person name="Ferraz C."/>
            <person name="Ferriera S."/>
            <person name="Fleischmann W."/>
            <person name="Fosler C."/>
            <person name="Gabrielian A.E."/>
            <person name="Garg N.S."/>
            <person name="Gelbart W.M."/>
            <person name="Glasser K."/>
            <person name="Glodek A."/>
            <person name="Gong F."/>
            <person name="Gorrell J.H."/>
            <person name="Gu Z."/>
            <person name="Guan P."/>
            <person name="Harris M."/>
            <person name="Harris N.L."/>
            <person name="Harvey D.A."/>
            <person name="Heiman T.J."/>
            <person name="Hernandez J.R."/>
            <person name="Houck J."/>
            <person name="Hostin D."/>
            <person name="Houston K.A."/>
            <person name="Howland T.J."/>
            <person name="Wei M.-H."/>
            <person name="Ibegwam C."/>
            <person name="Jalali M."/>
            <person name="Kalush F."/>
            <person name="Karpen G.H."/>
            <person name="Ke Z."/>
            <person name="Kennison J.A."/>
            <person name="Ketchum K.A."/>
            <person name="Kimmel B.E."/>
            <person name="Kodira C.D."/>
            <person name="Kraft C.L."/>
            <person name="Kravitz S."/>
            <person name="Kulp D."/>
            <person name="Lai Z."/>
            <person name="Lasko P."/>
            <person name="Lei Y."/>
            <person name="Levitsky A.A."/>
            <person name="Li J.H."/>
            <person name="Li Z."/>
            <person name="Liang Y."/>
            <person name="Lin X."/>
            <person name="Liu X."/>
            <person name="Mattei B."/>
            <person name="McIntosh T.C."/>
            <person name="McLeod M.P."/>
            <person name="McPherson D."/>
            <person name="Merkulov G."/>
            <person name="Milshina N.V."/>
            <person name="Mobarry C."/>
            <person name="Morris J."/>
            <person name="Moshrefi A."/>
            <person name="Mount S.M."/>
            <person name="Moy M."/>
            <person name="Murphy B."/>
            <person name="Murphy L."/>
            <person name="Muzny D.M."/>
            <person name="Nelson D.L."/>
            <person name="Nelson D.R."/>
            <person name="Nelson K.A."/>
            <person name="Nixon K."/>
            <person name="Nusskern D.R."/>
            <person name="Pacleb J.M."/>
            <person name="Palazzolo M."/>
            <person name="Pittman G.S."/>
            <person name="Pan S."/>
            <person name="Pollard J."/>
            <person name="Puri V."/>
            <person name="Reese M.G."/>
            <person name="Reinert K."/>
            <person name="Remington K."/>
            <person name="Saunders R.D.C."/>
            <person name="Scheeler F."/>
            <person name="Shen H."/>
            <person name="Shue B.C."/>
            <person name="Siden-Kiamos I."/>
            <person name="Simpson M."/>
            <person name="Skupski M.P."/>
            <person name="Smith T.J."/>
            <person name="Spier E."/>
            <person name="Spradling A.C."/>
            <person name="Stapleton M."/>
            <person name="Strong R."/>
            <person name="Sun E."/>
            <person name="Svirskas R."/>
            <person name="Tector C."/>
            <person name="Turner R."/>
            <person name="Venter E."/>
            <person name="Wang A.H."/>
            <person name="Wang X."/>
            <person name="Wang Z.-Y."/>
            <person name="Wassarman D.A."/>
            <person name="Weinstock G.M."/>
            <person name="Weissenbach J."/>
            <person name="Williams S.M."/>
            <person name="Woodage T."/>
            <person name="Worley K.C."/>
            <person name="Wu D."/>
            <person name="Yang S."/>
            <person name="Yao Q.A."/>
            <person name="Ye J."/>
            <person name="Yeh R.-F."/>
            <person name="Zaveri J.S."/>
            <person name="Zhan M."/>
            <person name="Zhang G."/>
            <person name="Zhao Q."/>
            <person name="Zheng L."/>
            <person name="Zheng X.H."/>
            <person name="Zhong F.N."/>
            <person name="Zhong W."/>
            <person name="Zhou X."/>
            <person name="Zhu S.C."/>
            <person name="Zhu X."/>
            <person name="Smith H.O."/>
            <person name="Gibbs R.A."/>
            <person name="Myers E.W."/>
            <person name="Rubin G.M."/>
            <person name="Venter J.C."/>
        </authorList>
    </citation>
    <scope>NUCLEOTIDE SEQUENCE [LARGE SCALE GENOMIC DNA]</scope>
    <source>
        <strain>Berkeley</strain>
    </source>
</reference>
<reference key="3">
    <citation type="journal article" date="2002" name="Genome Biol.">
        <title>Annotation of the Drosophila melanogaster euchromatic genome: a systematic review.</title>
        <authorList>
            <person name="Misra S."/>
            <person name="Crosby M.A."/>
            <person name="Mungall C.J."/>
            <person name="Matthews B.B."/>
            <person name="Campbell K.S."/>
            <person name="Hradecky P."/>
            <person name="Huang Y."/>
            <person name="Kaminker J.S."/>
            <person name="Millburn G.H."/>
            <person name="Prochnik S.E."/>
            <person name="Smith C.D."/>
            <person name="Tupy J.L."/>
            <person name="Whitfield E.J."/>
            <person name="Bayraktaroglu L."/>
            <person name="Berman B.P."/>
            <person name="Bettencourt B.R."/>
            <person name="Celniker S.E."/>
            <person name="de Grey A.D.N.J."/>
            <person name="Drysdale R.A."/>
            <person name="Harris N.L."/>
            <person name="Richter J."/>
            <person name="Russo S."/>
            <person name="Schroeder A.J."/>
            <person name="Shu S.Q."/>
            <person name="Stapleton M."/>
            <person name="Yamada C."/>
            <person name="Ashburner M."/>
            <person name="Gelbart W.M."/>
            <person name="Rubin G.M."/>
            <person name="Lewis S.E."/>
        </authorList>
    </citation>
    <scope>GENOME REANNOTATION</scope>
    <source>
        <strain>Berkeley</strain>
    </source>
</reference>
<reference key="4">
    <citation type="journal article" date="2002" name="Genome Biol.">
        <title>A Drosophila full-length cDNA resource.</title>
        <authorList>
            <person name="Stapleton M."/>
            <person name="Carlson J.W."/>
            <person name="Brokstein P."/>
            <person name="Yu C."/>
            <person name="Champe M."/>
            <person name="George R.A."/>
            <person name="Guarin H."/>
            <person name="Kronmiller B."/>
            <person name="Pacleb J.M."/>
            <person name="Park S."/>
            <person name="Wan K.H."/>
            <person name="Rubin G.M."/>
            <person name="Celniker S.E."/>
        </authorList>
    </citation>
    <scope>NUCLEOTIDE SEQUENCE [LARGE SCALE MRNA]</scope>
    <source>
        <strain>Berkeley</strain>
        <tissue>Embryo</tissue>
    </source>
</reference>
<reference key="5">
    <citation type="submission" date="2004-04" db="EMBL/GenBank/DDBJ databases">
        <authorList>
            <person name="Stapleton M."/>
            <person name="Carlson J.W."/>
            <person name="Chavez C."/>
            <person name="Frise E."/>
            <person name="George R.A."/>
            <person name="Pacleb J.M."/>
            <person name="Park S."/>
            <person name="Wan K.H."/>
            <person name="Yu C."/>
            <person name="Rubin G.M."/>
            <person name="Celniker S.E."/>
        </authorList>
    </citation>
    <scope>NUCLEOTIDE SEQUENCE [LARGE SCALE MRNA]</scope>
    <source>
        <strain>Berkeley</strain>
        <tissue>Embryo</tissue>
    </source>
</reference>
<reference evidence="13" key="6">
    <citation type="journal article" date="2010" name="Genetics">
        <title>Drosophila translational elongation factor-1gamma is modified in response to DOA kinase activity and is essential for cellular viability.</title>
        <authorList>
            <person name="Fan Y."/>
            <person name="Schlierf M."/>
            <person name="Gaspar A.C."/>
            <person name="Dreux C."/>
            <person name="Kpebe A."/>
            <person name="Chaney L."/>
            <person name="Mathieu A."/>
            <person name="Hitte C."/>
            <person name="Gremy O."/>
            <person name="Sarot E."/>
            <person name="Horn M."/>
            <person name="Zhao Y."/>
            <person name="Kinzy T.G."/>
            <person name="Rabinow L."/>
        </authorList>
    </citation>
    <scope>NUCLEOTIDE SEQUENCE [MRNA] OF 72-431</scope>
    <scope>FUNCTION</scope>
    <scope>INTERACTION WITH DOA</scope>
    <scope>DEVELOPMENTAL STAGE</scope>
    <scope>INDUCTION BY ECDYSONE</scope>
    <scope>PHOSPHORYLATION AT SER-294</scope>
    <scope>DISRUPTION PHENOTYPE</scope>
    <scope>MUTAGENESIS OF SER-294</scope>
</reference>
<reference key="7">
    <citation type="journal article" date="2014" name="J. Cell Sci.">
        <title>Protein kinase Darkener of apricot and its substrate EF1gamma regulate organelle transport along microtubules.</title>
        <authorList>
            <person name="Serpinskaya A.S."/>
            <person name="Tuphile K."/>
            <person name="Rabinow L."/>
            <person name="Gelfand V.I."/>
        </authorList>
    </citation>
    <scope>FUNCTION</scope>
    <scope>INTERACTION WITH MICROTUBULES</scope>
    <scope>SUBCELLULAR LOCATION</scope>
    <scope>PHOSPHORYLATION AT SER-294</scope>
    <scope>MUTAGENESIS OF SER-294</scope>
</reference>
<reference key="8">
    <citation type="journal article" date="2024" name="J. Cell Sci.">
        <title>Role of BicDR in bristle shaft construction and support of BicD functions.</title>
        <authorList>
            <person name="Jejina A."/>
            <person name="Ayala Y."/>
            <person name="Beuchle D."/>
            <person name="Hoehener T."/>
            <person name="Doerig R.E."/>
            <person name="Vazquez-Pianzola P."/>
            <person name="Hernandez G."/>
            <person name="Suter B."/>
        </authorList>
    </citation>
    <scope>FUNCTION</scope>
    <scope>INTERACTION WITH BICDR</scope>
    <scope>DISRUPTION PHENOTYPE</scope>
</reference>
<sequence>MVKGTLYTYPENFRAYKALIAAQYSGAQVKVADNFKFGETNKSAEFLKKFPGGKVPAFETAEGQYLSESNAIAYLLANEQLRGGKCPFVQAQVQQWISFADNEIVPASCAWVFPLLGILPQQKNSTAKQEAEAVLQQLNQKLQDATFLAGERITLADIVVFSSLLHLYEYVLEPSVRSAFGNVNRWFVTILNQKQVQAVVKDYKLCEKALVFDPKKYAEFQAKTGAAKPQQQAQQQKQEKKPKEKKEAPKKAAEPAEELDAADEALAAEPKSKDPFDALPKGTFNFDDFKRVYSNEDEAKSIPYFFDKFDAENYSIWFGEYKYNEELSKVFMSCNLITGMFQRLDKMRKAAFASVCLFGEDGNSTISGIWVWRGQDLAFTLSPDWQIDYEVYDWKKLDAKSEETKKLVTQYFSWSGTDKDGRKFNQGKIFK</sequence>